<gene>
    <name evidence="2" type="primary">tuf1</name>
    <name type="synonym">tufA</name>
    <name type="ordered locus">PSHAa0227</name>
</gene>
<reference key="1">
    <citation type="journal article" date="2005" name="Genome Res.">
        <title>Coping with cold: the genome of the versatile marine Antarctica bacterium Pseudoalteromonas haloplanktis TAC125.</title>
        <authorList>
            <person name="Medigue C."/>
            <person name="Krin E."/>
            <person name="Pascal G."/>
            <person name="Barbe V."/>
            <person name="Bernsel A."/>
            <person name="Bertin P.N."/>
            <person name="Cheung F."/>
            <person name="Cruveiller S."/>
            <person name="D'Amico S."/>
            <person name="Duilio A."/>
            <person name="Fang G."/>
            <person name="Feller G."/>
            <person name="Ho C."/>
            <person name="Mangenot S."/>
            <person name="Marino G."/>
            <person name="Nilsson J."/>
            <person name="Parrilli E."/>
            <person name="Rocha E.P.C."/>
            <person name="Rouy Z."/>
            <person name="Sekowska A."/>
            <person name="Tutino M.L."/>
            <person name="Vallenet D."/>
            <person name="von Heijne G."/>
            <person name="Danchin A."/>
        </authorList>
    </citation>
    <scope>NUCLEOTIDE SEQUENCE [LARGE SCALE GENOMIC DNA]</scope>
    <source>
        <strain>TAC 125</strain>
    </source>
</reference>
<dbReference type="EC" id="3.6.5.3" evidence="2"/>
<dbReference type="EMBL" id="CR954246">
    <property type="protein sequence ID" value="CAI85330.1"/>
    <property type="molecule type" value="Genomic_DNA"/>
</dbReference>
<dbReference type="SMR" id="Q3ILP4"/>
<dbReference type="STRING" id="326442.PSHAa0227"/>
<dbReference type="KEGG" id="pha:PSHAa0227"/>
<dbReference type="PATRIC" id="fig|326442.8.peg.218"/>
<dbReference type="eggNOG" id="COG0050">
    <property type="taxonomic scope" value="Bacteria"/>
</dbReference>
<dbReference type="HOGENOM" id="CLU_007265_0_0_6"/>
<dbReference type="BioCyc" id="PHAL326442:PSHA_RS01120-MONOMER"/>
<dbReference type="Proteomes" id="UP000006843">
    <property type="component" value="Chromosome I"/>
</dbReference>
<dbReference type="GO" id="GO:0005829">
    <property type="term" value="C:cytosol"/>
    <property type="evidence" value="ECO:0007669"/>
    <property type="project" value="TreeGrafter"/>
</dbReference>
<dbReference type="GO" id="GO:0005525">
    <property type="term" value="F:GTP binding"/>
    <property type="evidence" value="ECO:0007669"/>
    <property type="project" value="UniProtKB-UniRule"/>
</dbReference>
<dbReference type="GO" id="GO:0003924">
    <property type="term" value="F:GTPase activity"/>
    <property type="evidence" value="ECO:0007669"/>
    <property type="project" value="InterPro"/>
</dbReference>
<dbReference type="GO" id="GO:0097216">
    <property type="term" value="F:guanosine tetraphosphate binding"/>
    <property type="evidence" value="ECO:0007669"/>
    <property type="project" value="UniProtKB-ARBA"/>
</dbReference>
<dbReference type="GO" id="GO:0003746">
    <property type="term" value="F:translation elongation factor activity"/>
    <property type="evidence" value="ECO:0007669"/>
    <property type="project" value="UniProtKB-UniRule"/>
</dbReference>
<dbReference type="CDD" id="cd01884">
    <property type="entry name" value="EF_Tu"/>
    <property type="match status" value="1"/>
</dbReference>
<dbReference type="CDD" id="cd03697">
    <property type="entry name" value="EFTU_II"/>
    <property type="match status" value="1"/>
</dbReference>
<dbReference type="CDD" id="cd03707">
    <property type="entry name" value="EFTU_III"/>
    <property type="match status" value="1"/>
</dbReference>
<dbReference type="FunFam" id="2.40.30.10:FF:000001">
    <property type="entry name" value="Elongation factor Tu"/>
    <property type="match status" value="1"/>
</dbReference>
<dbReference type="FunFam" id="3.40.50.300:FF:000003">
    <property type="entry name" value="Elongation factor Tu"/>
    <property type="match status" value="1"/>
</dbReference>
<dbReference type="Gene3D" id="3.40.50.300">
    <property type="entry name" value="P-loop containing nucleotide triphosphate hydrolases"/>
    <property type="match status" value="1"/>
</dbReference>
<dbReference type="Gene3D" id="2.40.30.10">
    <property type="entry name" value="Translation factors"/>
    <property type="match status" value="2"/>
</dbReference>
<dbReference type="HAMAP" id="MF_00118_B">
    <property type="entry name" value="EF_Tu_B"/>
    <property type="match status" value="1"/>
</dbReference>
<dbReference type="InterPro" id="IPR041709">
    <property type="entry name" value="EF-Tu_GTP-bd"/>
</dbReference>
<dbReference type="InterPro" id="IPR050055">
    <property type="entry name" value="EF-Tu_GTPase"/>
</dbReference>
<dbReference type="InterPro" id="IPR004161">
    <property type="entry name" value="EFTu-like_2"/>
</dbReference>
<dbReference type="InterPro" id="IPR033720">
    <property type="entry name" value="EFTU_2"/>
</dbReference>
<dbReference type="InterPro" id="IPR031157">
    <property type="entry name" value="G_TR_CS"/>
</dbReference>
<dbReference type="InterPro" id="IPR027417">
    <property type="entry name" value="P-loop_NTPase"/>
</dbReference>
<dbReference type="InterPro" id="IPR005225">
    <property type="entry name" value="Small_GTP-bd"/>
</dbReference>
<dbReference type="InterPro" id="IPR000795">
    <property type="entry name" value="T_Tr_GTP-bd_dom"/>
</dbReference>
<dbReference type="InterPro" id="IPR009000">
    <property type="entry name" value="Transl_B-barrel_sf"/>
</dbReference>
<dbReference type="InterPro" id="IPR009001">
    <property type="entry name" value="Transl_elong_EF1A/Init_IF2_C"/>
</dbReference>
<dbReference type="InterPro" id="IPR004541">
    <property type="entry name" value="Transl_elong_EFTu/EF1A_bac/org"/>
</dbReference>
<dbReference type="InterPro" id="IPR004160">
    <property type="entry name" value="Transl_elong_EFTu/EF1A_C"/>
</dbReference>
<dbReference type="NCBIfam" id="TIGR00485">
    <property type="entry name" value="EF-Tu"/>
    <property type="match status" value="1"/>
</dbReference>
<dbReference type="NCBIfam" id="NF000766">
    <property type="entry name" value="PRK00049.1"/>
    <property type="match status" value="1"/>
</dbReference>
<dbReference type="NCBIfam" id="NF009372">
    <property type="entry name" value="PRK12735.1"/>
    <property type="match status" value="1"/>
</dbReference>
<dbReference type="NCBIfam" id="NF009373">
    <property type="entry name" value="PRK12736.1"/>
    <property type="match status" value="1"/>
</dbReference>
<dbReference type="NCBIfam" id="TIGR00231">
    <property type="entry name" value="small_GTP"/>
    <property type="match status" value="1"/>
</dbReference>
<dbReference type="PANTHER" id="PTHR43721:SF22">
    <property type="entry name" value="ELONGATION FACTOR TU, MITOCHONDRIAL"/>
    <property type="match status" value="1"/>
</dbReference>
<dbReference type="PANTHER" id="PTHR43721">
    <property type="entry name" value="ELONGATION FACTOR TU-RELATED"/>
    <property type="match status" value="1"/>
</dbReference>
<dbReference type="Pfam" id="PF00009">
    <property type="entry name" value="GTP_EFTU"/>
    <property type="match status" value="1"/>
</dbReference>
<dbReference type="Pfam" id="PF03144">
    <property type="entry name" value="GTP_EFTU_D2"/>
    <property type="match status" value="1"/>
</dbReference>
<dbReference type="Pfam" id="PF03143">
    <property type="entry name" value="GTP_EFTU_D3"/>
    <property type="match status" value="1"/>
</dbReference>
<dbReference type="PRINTS" id="PR00315">
    <property type="entry name" value="ELONGATNFCT"/>
</dbReference>
<dbReference type="SUPFAM" id="SSF50465">
    <property type="entry name" value="EF-Tu/eEF-1alpha/eIF2-gamma C-terminal domain"/>
    <property type="match status" value="1"/>
</dbReference>
<dbReference type="SUPFAM" id="SSF52540">
    <property type="entry name" value="P-loop containing nucleoside triphosphate hydrolases"/>
    <property type="match status" value="1"/>
</dbReference>
<dbReference type="SUPFAM" id="SSF50447">
    <property type="entry name" value="Translation proteins"/>
    <property type="match status" value="1"/>
</dbReference>
<dbReference type="PROSITE" id="PS00301">
    <property type="entry name" value="G_TR_1"/>
    <property type="match status" value="1"/>
</dbReference>
<dbReference type="PROSITE" id="PS51722">
    <property type="entry name" value="G_TR_2"/>
    <property type="match status" value="1"/>
</dbReference>
<organism>
    <name type="scientific">Pseudoalteromonas translucida (strain TAC 125)</name>
    <dbReference type="NCBI Taxonomy" id="326442"/>
    <lineage>
        <taxon>Bacteria</taxon>
        <taxon>Pseudomonadati</taxon>
        <taxon>Pseudomonadota</taxon>
        <taxon>Gammaproteobacteria</taxon>
        <taxon>Alteromonadales</taxon>
        <taxon>Pseudoalteromonadaceae</taxon>
        <taxon>Pseudoalteromonas</taxon>
    </lineage>
</organism>
<keyword id="KW-0963">Cytoplasm</keyword>
<keyword id="KW-0251">Elongation factor</keyword>
<keyword id="KW-0342">GTP-binding</keyword>
<keyword id="KW-0378">Hydrolase</keyword>
<keyword id="KW-0460">Magnesium</keyword>
<keyword id="KW-0479">Metal-binding</keyword>
<keyword id="KW-0547">Nucleotide-binding</keyword>
<keyword id="KW-0648">Protein biosynthesis</keyword>
<keyword id="KW-1185">Reference proteome</keyword>
<proteinExistence type="inferred from homology"/>
<name>EFTU1_PSET1</name>
<evidence type="ECO:0000250" key="1"/>
<evidence type="ECO:0000255" key="2">
    <source>
        <dbReference type="HAMAP-Rule" id="MF_00118"/>
    </source>
</evidence>
<protein>
    <recommendedName>
        <fullName evidence="2">Elongation factor Tu 1</fullName>
        <shortName evidence="2">EF-Tu 1</shortName>
        <ecNumber evidence="2">3.6.5.3</ecNumber>
    </recommendedName>
</protein>
<comment type="function">
    <text evidence="2">GTP hydrolase that promotes the GTP-dependent binding of aminoacyl-tRNA to the A-site of ribosomes during protein biosynthesis.</text>
</comment>
<comment type="catalytic activity">
    <reaction evidence="2">
        <text>GTP + H2O = GDP + phosphate + H(+)</text>
        <dbReference type="Rhea" id="RHEA:19669"/>
        <dbReference type="ChEBI" id="CHEBI:15377"/>
        <dbReference type="ChEBI" id="CHEBI:15378"/>
        <dbReference type="ChEBI" id="CHEBI:37565"/>
        <dbReference type="ChEBI" id="CHEBI:43474"/>
        <dbReference type="ChEBI" id="CHEBI:58189"/>
        <dbReference type="EC" id="3.6.5.3"/>
    </reaction>
    <physiologicalReaction direction="left-to-right" evidence="2">
        <dbReference type="Rhea" id="RHEA:19670"/>
    </physiologicalReaction>
</comment>
<comment type="subunit">
    <text evidence="2">Monomer.</text>
</comment>
<comment type="subcellular location">
    <subcellularLocation>
        <location evidence="2">Cytoplasm</location>
    </subcellularLocation>
</comment>
<comment type="similarity">
    <text evidence="2">Belongs to the TRAFAC class translation factor GTPase superfamily. Classic translation factor GTPase family. EF-Tu/EF-1A subfamily.</text>
</comment>
<feature type="chain" id="PRO_0000337468" description="Elongation factor Tu 1">
    <location>
        <begin position="1"/>
        <end position="394"/>
    </location>
</feature>
<feature type="domain" description="tr-type G">
    <location>
        <begin position="10"/>
        <end position="204"/>
    </location>
</feature>
<feature type="region of interest" description="G1" evidence="1">
    <location>
        <begin position="19"/>
        <end position="26"/>
    </location>
</feature>
<feature type="region of interest" description="G2" evidence="1">
    <location>
        <begin position="60"/>
        <end position="64"/>
    </location>
</feature>
<feature type="region of interest" description="G3" evidence="1">
    <location>
        <begin position="81"/>
        <end position="84"/>
    </location>
</feature>
<feature type="region of interest" description="G4" evidence="1">
    <location>
        <begin position="136"/>
        <end position="139"/>
    </location>
</feature>
<feature type="region of interest" description="G5" evidence="1">
    <location>
        <begin position="174"/>
        <end position="176"/>
    </location>
</feature>
<feature type="binding site" evidence="2">
    <location>
        <begin position="19"/>
        <end position="26"/>
    </location>
    <ligand>
        <name>GTP</name>
        <dbReference type="ChEBI" id="CHEBI:37565"/>
    </ligand>
</feature>
<feature type="binding site" evidence="2">
    <location>
        <position position="26"/>
    </location>
    <ligand>
        <name>Mg(2+)</name>
        <dbReference type="ChEBI" id="CHEBI:18420"/>
    </ligand>
</feature>
<feature type="binding site" evidence="2">
    <location>
        <begin position="81"/>
        <end position="85"/>
    </location>
    <ligand>
        <name>GTP</name>
        <dbReference type="ChEBI" id="CHEBI:37565"/>
    </ligand>
</feature>
<feature type="binding site" evidence="2">
    <location>
        <begin position="136"/>
        <end position="139"/>
    </location>
    <ligand>
        <name>GTP</name>
        <dbReference type="ChEBI" id="CHEBI:37565"/>
    </ligand>
</feature>
<sequence>MAKAKFERVKPHVNVGTIGHVDHGKTTLTAAITNVLAKVYGGVAKDFASIDNAPEERERGITISTSHVEYDTPTRHYAHVDCPGHADYVKNMITGAAQMDGAILVVAATDGPMPQTREHILLSRQVGVPYIIVFMNKCDMVDDEELLELVEMEVRELLSEYDFPGDDLPLIQGSALKALEGEKEWEDKIVELANALDSYIPEPQRDIDKPFIMPIEDVFSIQGRGTVVTGRVEAGIIRINDEIEIVGIRDTTKSICTGVEMFRKLLDEGRAGENIGALLRGTKREDVERGQVLAKPGSIKPHTTFESEVYVLSKDEGGRHTPFFKGYRPQFYFRTTDVTGDVQLPEGVEMVMPGDNVKMTVTLIAPIAMDEGLRFAIREGGRTVGAGVVANIVA</sequence>
<accession>Q3ILP4</accession>